<sequence length="15" mass="1656">VIGGDECNINEHRSL</sequence>
<organism>
    <name type="scientific">Crotalus atrox</name>
    <name type="common">Western diamondback rattlesnake</name>
    <dbReference type="NCBI Taxonomy" id="8730"/>
    <lineage>
        <taxon>Eukaryota</taxon>
        <taxon>Metazoa</taxon>
        <taxon>Chordata</taxon>
        <taxon>Craniata</taxon>
        <taxon>Vertebrata</taxon>
        <taxon>Euteleostomi</taxon>
        <taxon>Lepidosauria</taxon>
        <taxon>Squamata</taxon>
        <taxon>Bifurcata</taxon>
        <taxon>Unidentata</taxon>
        <taxon>Episquamata</taxon>
        <taxon>Toxicofera</taxon>
        <taxon>Serpentes</taxon>
        <taxon>Colubroidea</taxon>
        <taxon>Viperidae</taxon>
        <taxon>Crotalinae</taxon>
        <taxon>Crotalus</taxon>
    </lineage>
</organism>
<comment type="function">
    <text evidence="2">Snake venom serine protease that cleaves fibrinogen Aalpha chain (FGA), partially cleaves Bbeta chain (FGB) and has no activity on gamma chain. Is less potent than A1 and A2 alpha-fibrinogenases.</text>
</comment>
<comment type="activity regulation">
    <text evidence="2">Inhibited by PMSF, bovine aprotinin (APR), soybean trypsin inhibitor (STI), and high temperature (85 degrees Celsius). Is not inhibited by EDTA, and beta-mercaptoethanol.</text>
</comment>
<comment type="subunit">
    <text evidence="2">Monomer.</text>
</comment>
<comment type="subcellular location">
    <subcellularLocation>
        <location evidence="2">Secreted</location>
    </subcellularLocation>
</comment>
<comment type="tissue specificity">
    <text evidence="2">Expressed by the venom gland.</text>
</comment>
<comment type="similarity">
    <text evidence="1">Belongs to the peptidase S1 family. Snake venom subfamily.</text>
</comment>
<protein>
    <recommendedName>
        <fullName>Alpha-fibrinogenase A3</fullName>
        <ecNumber>3.4.21.-</ecNumber>
    </recommendedName>
    <alternativeName>
        <fullName>Snake venom serine protease</fullName>
        <shortName>SVSP</shortName>
    </alternativeName>
</protein>
<evidence type="ECO:0000255" key="1">
    <source>
        <dbReference type="PROSITE-ProRule" id="PRU00274"/>
    </source>
</evidence>
<evidence type="ECO:0000269" key="2">
    <source>
    </source>
</evidence>
<proteinExistence type="evidence at protein level"/>
<keyword id="KW-0903">Direct protein sequencing</keyword>
<keyword id="KW-1015">Disulfide bond</keyword>
<keyword id="KW-1206">Fibrinogenolytic toxin</keyword>
<keyword id="KW-1199">Hemostasis impairing toxin</keyword>
<keyword id="KW-0378">Hydrolase</keyword>
<keyword id="KW-0645">Protease</keyword>
<keyword id="KW-0964">Secreted</keyword>
<keyword id="KW-0720">Serine protease</keyword>
<keyword id="KW-0800">Toxin</keyword>
<accession>Q9PRW2</accession>
<dbReference type="EC" id="3.4.21.-"/>
<dbReference type="GO" id="GO:0005615">
    <property type="term" value="C:extracellular space"/>
    <property type="evidence" value="ECO:0000314"/>
    <property type="project" value="UniProtKB"/>
</dbReference>
<dbReference type="GO" id="GO:0004252">
    <property type="term" value="F:serine-type endopeptidase activity"/>
    <property type="evidence" value="ECO:0000314"/>
    <property type="project" value="UniProtKB"/>
</dbReference>
<dbReference type="GO" id="GO:0090729">
    <property type="term" value="F:toxin activity"/>
    <property type="evidence" value="ECO:0007669"/>
    <property type="project" value="UniProtKB-KW"/>
</dbReference>
<dbReference type="GO" id="GO:0006508">
    <property type="term" value="P:proteolysis"/>
    <property type="evidence" value="ECO:0007669"/>
    <property type="project" value="UniProtKB-KW"/>
</dbReference>
<reference key="1">
    <citation type="journal article" date="1994" name="Biochem. Biophys. Res. Commun.">
        <title>Isolation of multiple isoforms of alpha-fibrinogenase from the Western diamondback rattlesnake, Crotalus atrox: N-terminal sequence homology with ancrod, an antithrombotic agent from Malayan viper.</title>
        <authorList>
            <person name="Hung C.C."/>
            <person name="Chiou S.H."/>
        </authorList>
    </citation>
    <scope>PROTEIN SEQUENCE</scope>
    <scope>FUNCTION</scope>
    <scope>ACTIVITY REGULATION</scope>
    <scope>SUBUNIT</scope>
    <scope>SUBCELLULAR LOCATION</scope>
    <scope>TISSUE SPECIFICITY</scope>
    <source>
        <tissue>Venom</tissue>
    </source>
</reference>
<reference key="2">
    <citation type="journal article" date="2009" name="J. Proteome Res.">
        <title>Exploring the venom proteome of the western diamondback rattlesnake, Crotalus atrox, via snake venomics and combinatorial peptide ligand library approaches.</title>
        <authorList>
            <person name="Calvete J.J."/>
            <person name="Fasoli E."/>
            <person name="Sanz L."/>
            <person name="Boschetti E."/>
            <person name="Righetti P.G."/>
        </authorList>
    </citation>
    <scope>PROTEIN SEQUENCE</scope>
    <scope>IDENTIFICATION BY MASS SPECTROMETRY</scope>
    <source>
        <tissue>Venom</tissue>
    </source>
</reference>
<name>VSP3_CROAT</name>
<feature type="chain" id="PRO_0000406906" description="Alpha-fibrinogenase A3">
    <location>
        <begin position="1"/>
        <end position="15" status="greater than"/>
    </location>
</feature>
<feature type="disulfide bond">
    <location>
        <begin position="7"/>
        <end status="unknown"/>
    </location>
</feature>
<feature type="non-terminal residue">
    <location>
        <position position="15"/>
    </location>
</feature>